<feature type="chain" id="PRO_0000288201" description="tRNA (guanine-N(7)-)-methyltransferase">
    <location>
        <begin position="1"/>
        <end position="214"/>
    </location>
</feature>
<feature type="active site" evidence="1">
    <location>
        <position position="113"/>
    </location>
</feature>
<feature type="binding site" evidence="2">
    <location>
        <position position="35"/>
    </location>
    <ligand>
        <name>S-adenosyl-L-methionine</name>
        <dbReference type="ChEBI" id="CHEBI:59789"/>
    </ligand>
</feature>
<feature type="binding site" evidence="2">
    <location>
        <position position="60"/>
    </location>
    <ligand>
        <name>S-adenosyl-L-methionine</name>
        <dbReference type="ChEBI" id="CHEBI:59789"/>
    </ligand>
</feature>
<feature type="binding site" evidence="2">
    <location>
        <position position="87"/>
    </location>
    <ligand>
        <name>S-adenosyl-L-methionine</name>
        <dbReference type="ChEBI" id="CHEBI:59789"/>
    </ligand>
</feature>
<feature type="binding site" evidence="2">
    <location>
        <position position="113"/>
    </location>
    <ligand>
        <name>S-adenosyl-L-methionine</name>
        <dbReference type="ChEBI" id="CHEBI:59789"/>
    </ligand>
</feature>
<feature type="binding site" evidence="2">
    <location>
        <position position="117"/>
    </location>
    <ligand>
        <name>substrate</name>
    </ligand>
</feature>
<feature type="binding site" evidence="2">
    <location>
        <position position="149"/>
    </location>
    <ligand>
        <name>substrate</name>
    </ligand>
</feature>
<accession>A2C073</accession>
<dbReference type="EC" id="2.1.1.33" evidence="2"/>
<dbReference type="EMBL" id="CP000553">
    <property type="protein sequence ID" value="ABM74883.1"/>
    <property type="molecule type" value="Genomic_DNA"/>
</dbReference>
<dbReference type="RefSeq" id="WP_011823093.1">
    <property type="nucleotide sequence ID" value="NC_008819.1"/>
</dbReference>
<dbReference type="SMR" id="A2C073"/>
<dbReference type="KEGG" id="pme:NATL1_03191"/>
<dbReference type="eggNOG" id="COG0220">
    <property type="taxonomic scope" value="Bacteria"/>
</dbReference>
<dbReference type="HOGENOM" id="CLU_050910_1_3_3"/>
<dbReference type="UniPathway" id="UPA00989"/>
<dbReference type="Proteomes" id="UP000002592">
    <property type="component" value="Chromosome"/>
</dbReference>
<dbReference type="GO" id="GO:0043527">
    <property type="term" value="C:tRNA methyltransferase complex"/>
    <property type="evidence" value="ECO:0007669"/>
    <property type="project" value="TreeGrafter"/>
</dbReference>
<dbReference type="GO" id="GO:0008176">
    <property type="term" value="F:tRNA (guanine(46)-N7)-methyltransferase activity"/>
    <property type="evidence" value="ECO:0007669"/>
    <property type="project" value="UniProtKB-UniRule"/>
</dbReference>
<dbReference type="CDD" id="cd02440">
    <property type="entry name" value="AdoMet_MTases"/>
    <property type="match status" value="1"/>
</dbReference>
<dbReference type="Gene3D" id="3.40.50.150">
    <property type="entry name" value="Vaccinia Virus protein VP39"/>
    <property type="match status" value="1"/>
</dbReference>
<dbReference type="HAMAP" id="MF_01057">
    <property type="entry name" value="tRNA_methyltr_TrmB"/>
    <property type="match status" value="1"/>
</dbReference>
<dbReference type="InterPro" id="IPR029063">
    <property type="entry name" value="SAM-dependent_MTases_sf"/>
</dbReference>
<dbReference type="InterPro" id="IPR003358">
    <property type="entry name" value="tRNA_(Gua-N-7)_MeTrfase_Trmb"/>
</dbReference>
<dbReference type="InterPro" id="IPR055361">
    <property type="entry name" value="tRNA_methyltr_TrmB_bact"/>
</dbReference>
<dbReference type="NCBIfam" id="TIGR00091">
    <property type="entry name" value="tRNA (guanosine(46)-N7)-methyltransferase TrmB"/>
    <property type="match status" value="1"/>
</dbReference>
<dbReference type="PANTHER" id="PTHR23417">
    <property type="entry name" value="3-DEOXY-D-MANNO-OCTULOSONIC-ACID TRANSFERASE/TRNA GUANINE-N 7 - -METHYLTRANSFERASE"/>
    <property type="match status" value="1"/>
</dbReference>
<dbReference type="PANTHER" id="PTHR23417:SF21">
    <property type="entry name" value="TRNA (GUANINE-N(7)-)-METHYLTRANSFERASE"/>
    <property type="match status" value="1"/>
</dbReference>
<dbReference type="Pfam" id="PF02390">
    <property type="entry name" value="Methyltransf_4"/>
    <property type="match status" value="1"/>
</dbReference>
<dbReference type="SUPFAM" id="SSF53335">
    <property type="entry name" value="S-adenosyl-L-methionine-dependent methyltransferases"/>
    <property type="match status" value="1"/>
</dbReference>
<dbReference type="PROSITE" id="PS51625">
    <property type="entry name" value="SAM_MT_TRMB"/>
    <property type="match status" value="1"/>
</dbReference>
<gene>
    <name evidence="2" type="primary">trmB</name>
    <name type="ordered locus">NATL1_03191</name>
</gene>
<organism>
    <name type="scientific">Prochlorococcus marinus (strain NATL1A)</name>
    <dbReference type="NCBI Taxonomy" id="167555"/>
    <lineage>
        <taxon>Bacteria</taxon>
        <taxon>Bacillati</taxon>
        <taxon>Cyanobacteriota</taxon>
        <taxon>Cyanophyceae</taxon>
        <taxon>Synechococcales</taxon>
        <taxon>Prochlorococcaceae</taxon>
        <taxon>Prochlorococcus</taxon>
    </lineage>
</organism>
<name>TRMB_PROM1</name>
<reference key="1">
    <citation type="journal article" date="2007" name="PLoS Genet.">
        <title>Patterns and implications of gene gain and loss in the evolution of Prochlorococcus.</title>
        <authorList>
            <person name="Kettler G.C."/>
            <person name="Martiny A.C."/>
            <person name="Huang K."/>
            <person name="Zucker J."/>
            <person name="Coleman M.L."/>
            <person name="Rodrigue S."/>
            <person name="Chen F."/>
            <person name="Lapidus A."/>
            <person name="Ferriera S."/>
            <person name="Johnson J."/>
            <person name="Steglich C."/>
            <person name="Church G.M."/>
            <person name="Richardson P."/>
            <person name="Chisholm S.W."/>
        </authorList>
    </citation>
    <scope>NUCLEOTIDE SEQUENCE [LARGE SCALE GENOMIC DNA]</scope>
    <source>
        <strain>NATL1A</strain>
    </source>
</reference>
<evidence type="ECO:0000250" key="1"/>
<evidence type="ECO:0000255" key="2">
    <source>
        <dbReference type="HAMAP-Rule" id="MF_01057"/>
    </source>
</evidence>
<sequence>MRQHVNPLSQFFQLPLSLPSKNILFEKSHYPIHLDIGSAKGEFLIELATKYPDWNFVGLEIREPLVSLCEKKRRKLELTNLKFLFCNVNVSLDEWLSDLDFGQLKRVSIQFPDPWFKRKHFKRRVLNTNILNSIAKSMSKDGEIFIQSDILKLIEYMTNTIDENRYFTRKNVGDLRSIDKNPYDVMTDREIFSLKKNLLIYRVMYIRNSLLFTN</sequence>
<keyword id="KW-0489">Methyltransferase</keyword>
<keyword id="KW-0949">S-adenosyl-L-methionine</keyword>
<keyword id="KW-0808">Transferase</keyword>
<keyword id="KW-0819">tRNA processing</keyword>
<proteinExistence type="inferred from homology"/>
<comment type="function">
    <text evidence="2">Catalyzes the formation of N(7)-methylguanine at position 46 (m7G46) in tRNA.</text>
</comment>
<comment type="catalytic activity">
    <reaction evidence="2">
        <text>guanosine(46) in tRNA + S-adenosyl-L-methionine = N(7)-methylguanosine(46) in tRNA + S-adenosyl-L-homocysteine</text>
        <dbReference type="Rhea" id="RHEA:42708"/>
        <dbReference type="Rhea" id="RHEA-COMP:10188"/>
        <dbReference type="Rhea" id="RHEA-COMP:10189"/>
        <dbReference type="ChEBI" id="CHEBI:57856"/>
        <dbReference type="ChEBI" id="CHEBI:59789"/>
        <dbReference type="ChEBI" id="CHEBI:74269"/>
        <dbReference type="ChEBI" id="CHEBI:74480"/>
        <dbReference type="EC" id="2.1.1.33"/>
    </reaction>
</comment>
<comment type="pathway">
    <text evidence="2">tRNA modification; N(7)-methylguanine-tRNA biosynthesis.</text>
</comment>
<comment type="similarity">
    <text evidence="2">Belongs to the class I-like SAM-binding methyltransferase superfamily. TrmB family.</text>
</comment>
<protein>
    <recommendedName>
        <fullName evidence="2">tRNA (guanine-N(7)-)-methyltransferase</fullName>
        <ecNumber evidence="2">2.1.1.33</ecNumber>
    </recommendedName>
    <alternativeName>
        <fullName evidence="2">tRNA (guanine(46)-N(7))-methyltransferase</fullName>
    </alternativeName>
    <alternativeName>
        <fullName evidence="2">tRNA(m7G46)-methyltransferase</fullName>
    </alternativeName>
</protein>